<keyword id="KW-0175">Coiled coil</keyword>
<keyword id="KW-1185">Reference proteome</keyword>
<accession>Q0VET5</accession>
<accession>Q9CW10</accession>
<dbReference type="EMBL" id="BC119093">
    <property type="protein sequence ID" value="AAI19094.1"/>
    <property type="molecule type" value="mRNA"/>
</dbReference>
<dbReference type="EMBL" id="BC119119">
    <property type="protein sequence ID" value="AAI19120.1"/>
    <property type="molecule type" value="mRNA"/>
</dbReference>
<dbReference type="EMBL" id="AK005476">
    <property type="protein sequence ID" value="BAB24066.1"/>
    <property type="molecule type" value="mRNA"/>
</dbReference>
<dbReference type="CCDS" id="CCDS40181.1"/>
<dbReference type="RefSeq" id="NP_001369751.1">
    <property type="nucleotide sequence ID" value="NM_001382822.1"/>
</dbReference>
<dbReference type="RefSeq" id="NP_082326.1">
    <property type="nucleotide sequence ID" value="NM_028050.2"/>
</dbReference>
<dbReference type="RefSeq" id="XP_006536319.1">
    <property type="nucleotide sequence ID" value="XM_006536256.3"/>
</dbReference>
<dbReference type="RefSeq" id="XP_030098865.1">
    <property type="nucleotide sequence ID" value="XM_030243005.2"/>
</dbReference>
<dbReference type="RefSeq" id="XP_030098866.1">
    <property type="nucleotide sequence ID" value="XM_030243006.1"/>
</dbReference>
<dbReference type="SMR" id="Q0VET5"/>
<dbReference type="FunCoup" id="Q0VET5">
    <property type="interactions" value="9"/>
</dbReference>
<dbReference type="STRING" id="10090.ENSMUSP00000026573"/>
<dbReference type="GlyGen" id="Q0VET5">
    <property type="glycosylation" value="1 site, 1 O-linked glycan (1 site)"/>
</dbReference>
<dbReference type="iPTMnet" id="Q0VET5"/>
<dbReference type="PhosphoSitePlus" id="Q0VET5"/>
<dbReference type="PaxDb" id="10090-ENSMUSP00000130905"/>
<dbReference type="ProteomicsDB" id="286225"/>
<dbReference type="Antibodypedia" id="70549">
    <property type="antibodies" value="9 antibodies from 4 providers"/>
</dbReference>
<dbReference type="Ensembl" id="ENSMUST00000026573.7">
    <property type="protein sequence ID" value="ENSMUSP00000026573.6"/>
    <property type="gene ID" value="ENSMUSG00000025500.13"/>
</dbReference>
<dbReference type="GeneID" id="72000"/>
<dbReference type="KEGG" id="mmu:72000"/>
<dbReference type="UCSC" id="uc009kjz.1">
    <property type="organism name" value="mouse"/>
</dbReference>
<dbReference type="AGR" id="MGI:1919250"/>
<dbReference type="CTD" id="256329"/>
<dbReference type="MGI" id="MGI:1919250">
    <property type="gene designation" value="Lmntd2"/>
</dbReference>
<dbReference type="VEuPathDB" id="HostDB:ENSMUSG00000025500"/>
<dbReference type="eggNOG" id="KOG0977">
    <property type="taxonomic scope" value="Eukaryota"/>
</dbReference>
<dbReference type="GeneTree" id="ENSGT00390000012150"/>
<dbReference type="HOGENOM" id="CLU_432519_0_0_1"/>
<dbReference type="InParanoid" id="Q0VET5"/>
<dbReference type="OMA" id="HLTVWGE"/>
<dbReference type="OrthoDB" id="9838108at2759"/>
<dbReference type="BioGRID-ORCS" id="72000">
    <property type="hits" value="0 hits in 77 CRISPR screens"/>
</dbReference>
<dbReference type="PRO" id="PR:Q0VET5"/>
<dbReference type="Proteomes" id="UP000000589">
    <property type="component" value="Chromosome 7"/>
</dbReference>
<dbReference type="RNAct" id="Q0VET5">
    <property type="molecule type" value="protein"/>
</dbReference>
<dbReference type="Bgee" id="ENSMUSG00000025500">
    <property type="expression patterns" value="Expressed in seminiferous tubule of testis and 103 other cell types or tissues"/>
</dbReference>
<dbReference type="ExpressionAtlas" id="Q0VET5">
    <property type="expression patterns" value="baseline and differential"/>
</dbReference>
<dbReference type="GO" id="GO:0048026">
    <property type="term" value="P:positive regulation of mRNA splicing, via spliceosome"/>
    <property type="evidence" value="ECO:0000315"/>
    <property type="project" value="MGI"/>
</dbReference>
<dbReference type="Gene3D" id="2.60.40.1260">
    <property type="entry name" value="Lamin Tail domain"/>
    <property type="match status" value="1"/>
</dbReference>
<dbReference type="InterPro" id="IPR001322">
    <property type="entry name" value="Lamin_tail_dom"/>
</dbReference>
<dbReference type="InterPro" id="IPR036415">
    <property type="entry name" value="Lamin_tail_dom_sf"/>
</dbReference>
<dbReference type="InterPro" id="IPR052877">
    <property type="entry name" value="Lamin_tail_domain"/>
</dbReference>
<dbReference type="PANTHER" id="PTHR19956">
    <property type="entry name" value="LAMIN TAIL DOMAIN-CONTAINING PROTEIN 2"/>
    <property type="match status" value="1"/>
</dbReference>
<dbReference type="PANTHER" id="PTHR19956:SF5">
    <property type="entry name" value="LAMIN TAIL DOMAIN-CONTAINING PROTEIN 2"/>
    <property type="match status" value="1"/>
</dbReference>
<dbReference type="SUPFAM" id="SSF74853">
    <property type="entry name" value="Lamin A/C globular tail domain"/>
    <property type="match status" value="1"/>
</dbReference>
<dbReference type="PROSITE" id="PS51841">
    <property type="entry name" value="LTD"/>
    <property type="match status" value="1"/>
</dbReference>
<sequence>MAPKSCQESEDKQVSPAPAGVQPDSSDLGSPVGTPVDRVAPSYSQSAKLYTSTPMGCSVKQQLAPETLDPRTLRLLWEQRELEIQALRWAVQNGHNARYSSILQEVAGVPSERNSKSQDKFLRNQVQKLTLELKAQKEQAQQEKQQLEEKLQQNLWAKQQLEAELQTFQKSCLLQLARSSWVGRVLRSQTGSVEVVTTEVLRDPSDFSESAEIPTSGEGFPLEDVDWNSIAQRYPNLFSNLNFYSDQKQSQPPTSETYTLDSEGATKHTEKPTKILEWSALPLLDTSSSERTQSDTSSCPIALHSGAKKTTGHPSQGTNLASSEQMQEHTRSFSGYTEDLCKSHSPSCSKTVLESYTDLHHPYTRPQLNPFGCCLKIAAVSHREKFIRVINQSQAETIDLGGFVLQQLVRDFPVCMYRFPPGTLLAPQHHITVWGEGTSRTKKQLPVASGQDPFQFQSSRGCVTVLVNPQGQVLSEHQATPCVTLGSKIFTDNTDWSIDCFPLSESEPDVHPGEQQCRPSSPQKGRAKDAGARRKKPGPGVRQHRHSSTSGLRASRTLHPTETRDILPLLSSRKLLPSGEVLTQQEGVKAETSELLPVIPECPSRLCLGEDSLGRQEYKVQVCRKSVDLSCPMVALSVQNTAESRYGFRFLCYPPITEELCRRL</sequence>
<organism>
    <name type="scientific">Mus musculus</name>
    <name type="common">Mouse</name>
    <dbReference type="NCBI Taxonomy" id="10090"/>
    <lineage>
        <taxon>Eukaryota</taxon>
        <taxon>Metazoa</taxon>
        <taxon>Chordata</taxon>
        <taxon>Craniata</taxon>
        <taxon>Vertebrata</taxon>
        <taxon>Euteleostomi</taxon>
        <taxon>Mammalia</taxon>
        <taxon>Eutheria</taxon>
        <taxon>Euarchontoglires</taxon>
        <taxon>Glires</taxon>
        <taxon>Rodentia</taxon>
        <taxon>Myomorpha</taxon>
        <taxon>Muroidea</taxon>
        <taxon>Muridae</taxon>
        <taxon>Murinae</taxon>
        <taxon>Mus</taxon>
        <taxon>Mus</taxon>
    </lineage>
</organism>
<evidence type="ECO:0000255" key="1"/>
<evidence type="ECO:0000255" key="2">
    <source>
        <dbReference type="PROSITE-ProRule" id="PRU01187"/>
    </source>
</evidence>
<evidence type="ECO:0000256" key="3">
    <source>
        <dbReference type="SAM" id="MobiDB-lite"/>
    </source>
</evidence>
<gene>
    <name type="primary">Lmntd2</name>
</gene>
<protein>
    <recommendedName>
        <fullName>Lamin tail domain-containing protein 2</fullName>
    </recommendedName>
</protein>
<feature type="chain" id="PRO_0000251930" description="Lamin tail domain-containing protein 2">
    <location>
        <begin position="1"/>
        <end position="664"/>
    </location>
</feature>
<feature type="domain" description="LTD" evidence="2">
    <location>
        <begin position="362"/>
        <end position="481"/>
    </location>
</feature>
<feature type="region of interest" description="Disordered" evidence="3">
    <location>
        <begin position="1"/>
        <end position="40"/>
    </location>
</feature>
<feature type="region of interest" description="Disordered" evidence="3">
    <location>
        <begin position="245"/>
        <end position="272"/>
    </location>
</feature>
<feature type="region of interest" description="Disordered" evidence="3">
    <location>
        <begin position="286"/>
        <end position="329"/>
    </location>
</feature>
<feature type="region of interest" description="Disordered" evidence="3">
    <location>
        <begin position="504"/>
        <end position="563"/>
    </location>
</feature>
<feature type="coiled-coil region" evidence="1">
    <location>
        <begin position="118"/>
        <end position="169"/>
    </location>
</feature>
<feature type="compositionally biased region" description="Polar residues" evidence="3">
    <location>
        <begin position="245"/>
        <end position="260"/>
    </location>
</feature>
<feature type="compositionally biased region" description="Low complexity" evidence="3">
    <location>
        <begin position="286"/>
        <end position="298"/>
    </location>
</feature>
<feature type="compositionally biased region" description="Polar residues" evidence="3">
    <location>
        <begin position="312"/>
        <end position="325"/>
    </location>
</feature>
<feature type="compositionally biased region" description="Basic residues" evidence="3">
    <location>
        <begin position="533"/>
        <end position="547"/>
    </location>
</feature>
<reference key="1">
    <citation type="journal article" date="2004" name="Genome Res.">
        <title>The status, quality, and expansion of the NIH full-length cDNA project: the Mammalian Gene Collection (MGC).</title>
        <authorList>
            <consortium name="The MGC Project Team"/>
        </authorList>
    </citation>
    <scope>NUCLEOTIDE SEQUENCE [LARGE SCALE MRNA]</scope>
    <source>
        <tissue>Testis</tissue>
    </source>
</reference>
<reference key="2">
    <citation type="journal article" date="2005" name="Science">
        <title>The transcriptional landscape of the mammalian genome.</title>
        <authorList>
            <person name="Carninci P."/>
            <person name="Kasukawa T."/>
            <person name="Katayama S."/>
            <person name="Gough J."/>
            <person name="Frith M.C."/>
            <person name="Maeda N."/>
            <person name="Oyama R."/>
            <person name="Ravasi T."/>
            <person name="Lenhard B."/>
            <person name="Wells C."/>
            <person name="Kodzius R."/>
            <person name="Shimokawa K."/>
            <person name="Bajic V.B."/>
            <person name="Brenner S.E."/>
            <person name="Batalov S."/>
            <person name="Forrest A.R."/>
            <person name="Zavolan M."/>
            <person name="Davis M.J."/>
            <person name="Wilming L.G."/>
            <person name="Aidinis V."/>
            <person name="Allen J.E."/>
            <person name="Ambesi-Impiombato A."/>
            <person name="Apweiler R."/>
            <person name="Aturaliya R.N."/>
            <person name="Bailey T.L."/>
            <person name="Bansal M."/>
            <person name="Baxter L."/>
            <person name="Beisel K.W."/>
            <person name="Bersano T."/>
            <person name="Bono H."/>
            <person name="Chalk A.M."/>
            <person name="Chiu K.P."/>
            <person name="Choudhary V."/>
            <person name="Christoffels A."/>
            <person name="Clutterbuck D.R."/>
            <person name="Crowe M.L."/>
            <person name="Dalla E."/>
            <person name="Dalrymple B.P."/>
            <person name="de Bono B."/>
            <person name="Della Gatta G."/>
            <person name="di Bernardo D."/>
            <person name="Down T."/>
            <person name="Engstrom P."/>
            <person name="Fagiolini M."/>
            <person name="Faulkner G."/>
            <person name="Fletcher C.F."/>
            <person name="Fukushima T."/>
            <person name="Furuno M."/>
            <person name="Futaki S."/>
            <person name="Gariboldi M."/>
            <person name="Georgii-Hemming P."/>
            <person name="Gingeras T.R."/>
            <person name="Gojobori T."/>
            <person name="Green R.E."/>
            <person name="Gustincich S."/>
            <person name="Harbers M."/>
            <person name="Hayashi Y."/>
            <person name="Hensch T.K."/>
            <person name="Hirokawa N."/>
            <person name="Hill D."/>
            <person name="Huminiecki L."/>
            <person name="Iacono M."/>
            <person name="Ikeo K."/>
            <person name="Iwama A."/>
            <person name="Ishikawa T."/>
            <person name="Jakt M."/>
            <person name="Kanapin A."/>
            <person name="Katoh M."/>
            <person name="Kawasawa Y."/>
            <person name="Kelso J."/>
            <person name="Kitamura H."/>
            <person name="Kitano H."/>
            <person name="Kollias G."/>
            <person name="Krishnan S.P."/>
            <person name="Kruger A."/>
            <person name="Kummerfeld S.K."/>
            <person name="Kurochkin I.V."/>
            <person name="Lareau L.F."/>
            <person name="Lazarevic D."/>
            <person name="Lipovich L."/>
            <person name="Liu J."/>
            <person name="Liuni S."/>
            <person name="McWilliam S."/>
            <person name="Madan Babu M."/>
            <person name="Madera M."/>
            <person name="Marchionni L."/>
            <person name="Matsuda H."/>
            <person name="Matsuzawa S."/>
            <person name="Miki H."/>
            <person name="Mignone F."/>
            <person name="Miyake S."/>
            <person name="Morris K."/>
            <person name="Mottagui-Tabar S."/>
            <person name="Mulder N."/>
            <person name="Nakano N."/>
            <person name="Nakauchi H."/>
            <person name="Ng P."/>
            <person name="Nilsson R."/>
            <person name="Nishiguchi S."/>
            <person name="Nishikawa S."/>
            <person name="Nori F."/>
            <person name="Ohara O."/>
            <person name="Okazaki Y."/>
            <person name="Orlando V."/>
            <person name="Pang K.C."/>
            <person name="Pavan W.J."/>
            <person name="Pavesi G."/>
            <person name="Pesole G."/>
            <person name="Petrovsky N."/>
            <person name="Piazza S."/>
            <person name="Reed J."/>
            <person name="Reid J.F."/>
            <person name="Ring B.Z."/>
            <person name="Ringwald M."/>
            <person name="Rost B."/>
            <person name="Ruan Y."/>
            <person name="Salzberg S.L."/>
            <person name="Sandelin A."/>
            <person name="Schneider C."/>
            <person name="Schoenbach C."/>
            <person name="Sekiguchi K."/>
            <person name="Semple C.A."/>
            <person name="Seno S."/>
            <person name="Sessa L."/>
            <person name="Sheng Y."/>
            <person name="Shibata Y."/>
            <person name="Shimada H."/>
            <person name="Shimada K."/>
            <person name="Silva D."/>
            <person name="Sinclair B."/>
            <person name="Sperling S."/>
            <person name="Stupka E."/>
            <person name="Sugiura K."/>
            <person name="Sultana R."/>
            <person name="Takenaka Y."/>
            <person name="Taki K."/>
            <person name="Tammoja K."/>
            <person name="Tan S.L."/>
            <person name="Tang S."/>
            <person name="Taylor M.S."/>
            <person name="Tegner J."/>
            <person name="Teichmann S.A."/>
            <person name="Ueda H.R."/>
            <person name="van Nimwegen E."/>
            <person name="Verardo R."/>
            <person name="Wei C.L."/>
            <person name="Yagi K."/>
            <person name="Yamanishi H."/>
            <person name="Zabarovsky E."/>
            <person name="Zhu S."/>
            <person name="Zimmer A."/>
            <person name="Hide W."/>
            <person name="Bult C."/>
            <person name="Grimmond S.M."/>
            <person name="Teasdale R.D."/>
            <person name="Liu E.T."/>
            <person name="Brusic V."/>
            <person name="Quackenbush J."/>
            <person name="Wahlestedt C."/>
            <person name="Mattick J.S."/>
            <person name="Hume D.A."/>
            <person name="Kai C."/>
            <person name="Sasaki D."/>
            <person name="Tomaru Y."/>
            <person name="Fukuda S."/>
            <person name="Kanamori-Katayama M."/>
            <person name="Suzuki M."/>
            <person name="Aoki J."/>
            <person name="Arakawa T."/>
            <person name="Iida J."/>
            <person name="Imamura K."/>
            <person name="Itoh M."/>
            <person name="Kato T."/>
            <person name="Kawaji H."/>
            <person name="Kawagashira N."/>
            <person name="Kawashima T."/>
            <person name="Kojima M."/>
            <person name="Kondo S."/>
            <person name="Konno H."/>
            <person name="Nakano K."/>
            <person name="Ninomiya N."/>
            <person name="Nishio T."/>
            <person name="Okada M."/>
            <person name="Plessy C."/>
            <person name="Shibata K."/>
            <person name="Shiraki T."/>
            <person name="Suzuki S."/>
            <person name="Tagami M."/>
            <person name="Waki K."/>
            <person name="Watahiki A."/>
            <person name="Okamura-Oho Y."/>
            <person name="Suzuki H."/>
            <person name="Kawai J."/>
            <person name="Hayashizaki Y."/>
        </authorList>
    </citation>
    <scope>NUCLEOTIDE SEQUENCE [LARGE SCALE MRNA] OF 465-664</scope>
    <source>
        <strain>C57BL/6J</strain>
        <tissue>Placenta</tissue>
    </source>
</reference>
<name>LMTD2_MOUSE</name>
<proteinExistence type="evidence at transcript level"/>